<sequence length="671" mass="73635">MESIEQQLTELRTTLRHHEYLYHVMDAPEIPDVEYDRLMRELRELETKHPELITPDSPTQRVGAAPLAAFSQIRHEVPMLSLDNVFDEESFLAFNKRVQDRLKSNEKVTWCCELKLDGLAVSILYENGVLVSAATRGDGTTGEDITSNVRTIRAIPLKLHGENIPARLEVRGEVFLPQAGFEKINEDARRTGGKVFANPRNAAAGSLRQLDPRITAKRPLTFFCYGVGVLEGGELPDTHLGRLLQFKQWGLPVSDRVTLCESAEEVLAFYHKVEEDRPTLGFDIDGVVIKVNSLAQQERLGFVARAPRWAVAFKFPAQEQMTFVRDVEFQVGRTGAITPVARLEPVHVAGVLVSNATLHNADEIERLGLRIGDKVVIRRAGDVIPQVVNVVLSERPEDTREVVFPTHCPVCGSDVERVEGEAVARCTGGLICGAQRKESLKHFVSRRAMDVDGMGDKIIDQLVEKEYVHTPADLFKLTAGKLTGLERMGPKSAQNVVNALEKAKETTFARFLYALGIREVGEATAAGLAAYFGTLEALEAASIEELQKVPDVGIVVASHVHNFFAEESNRNVISELLAEGVHWPAPIVINAEEIDSPFAGKTVVLTGSLSQMSRDDAKARLVELGAKVAGSVSKKTDLVIAGEAAGSKLAKAQELGIEVIDEAEMLRLLGS</sequence>
<evidence type="ECO:0000255" key="1">
    <source>
        <dbReference type="HAMAP-Rule" id="MF_01588"/>
    </source>
</evidence>
<accession>B7N602</accession>
<reference key="1">
    <citation type="journal article" date="2009" name="PLoS Genet.">
        <title>Organised genome dynamics in the Escherichia coli species results in highly diverse adaptive paths.</title>
        <authorList>
            <person name="Touchon M."/>
            <person name="Hoede C."/>
            <person name="Tenaillon O."/>
            <person name="Barbe V."/>
            <person name="Baeriswyl S."/>
            <person name="Bidet P."/>
            <person name="Bingen E."/>
            <person name="Bonacorsi S."/>
            <person name="Bouchier C."/>
            <person name="Bouvet O."/>
            <person name="Calteau A."/>
            <person name="Chiapello H."/>
            <person name="Clermont O."/>
            <person name="Cruveiller S."/>
            <person name="Danchin A."/>
            <person name="Diard M."/>
            <person name="Dossat C."/>
            <person name="Karoui M.E."/>
            <person name="Frapy E."/>
            <person name="Garry L."/>
            <person name="Ghigo J.M."/>
            <person name="Gilles A.M."/>
            <person name="Johnson J."/>
            <person name="Le Bouguenec C."/>
            <person name="Lescat M."/>
            <person name="Mangenot S."/>
            <person name="Martinez-Jehanne V."/>
            <person name="Matic I."/>
            <person name="Nassif X."/>
            <person name="Oztas S."/>
            <person name="Petit M.A."/>
            <person name="Pichon C."/>
            <person name="Rouy Z."/>
            <person name="Ruf C.S."/>
            <person name="Schneider D."/>
            <person name="Tourret J."/>
            <person name="Vacherie B."/>
            <person name="Vallenet D."/>
            <person name="Medigue C."/>
            <person name="Rocha E.P.C."/>
            <person name="Denamur E."/>
        </authorList>
    </citation>
    <scope>NUCLEOTIDE SEQUENCE [LARGE SCALE GENOMIC DNA]</scope>
    <source>
        <strain>UMN026 / ExPEC</strain>
    </source>
</reference>
<keyword id="KW-0227">DNA damage</keyword>
<keyword id="KW-0234">DNA repair</keyword>
<keyword id="KW-0235">DNA replication</keyword>
<keyword id="KW-0436">Ligase</keyword>
<keyword id="KW-0460">Magnesium</keyword>
<keyword id="KW-0464">Manganese</keyword>
<keyword id="KW-0479">Metal-binding</keyword>
<keyword id="KW-0520">NAD</keyword>
<keyword id="KW-0862">Zinc</keyword>
<feature type="chain" id="PRO_0000380377" description="DNA ligase">
    <location>
        <begin position="1"/>
        <end position="671"/>
    </location>
</feature>
<feature type="domain" description="BRCT" evidence="1">
    <location>
        <begin position="593"/>
        <end position="671"/>
    </location>
</feature>
<feature type="active site" description="N6-AMP-lysine intermediate" evidence="1">
    <location>
        <position position="115"/>
    </location>
</feature>
<feature type="binding site" evidence="1">
    <location>
        <begin position="32"/>
        <end position="36"/>
    </location>
    <ligand>
        <name>NAD(+)</name>
        <dbReference type="ChEBI" id="CHEBI:57540"/>
    </ligand>
</feature>
<feature type="binding site" evidence="1">
    <location>
        <begin position="81"/>
        <end position="82"/>
    </location>
    <ligand>
        <name>NAD(+)</name>
        <dbReference type="ChEBI" id="CHEBI:57540"/>
    </ligand>
</feature>
<feature type="binding site" evidence="1">
    <location>
        <position position="113"/>
    </location>
    <ligand>
        <name>NAD(+)</name>
        <dbReference type="ChEBI" id="CHEBI:57540"/>
    </ligand>
</feature>
<feature type="binding site" evidence="1">
    <location>
        <position position="136"/>
    </location>
    <ligand>
        <name>NAD(+)</name>
        <dbReference type="ChEBI" id="CHEBI:57540"/>
    </ligand>
</feature>
<feature type="binding site" evidence="1">
    <location>
        <position position="173"/>
    </location>
    <ligand>
        <name>NAD(+)</name>
        <dbReference type="ChEBI" id="CHEBI:57540"/>
    </ligand>
</feature>
<feature type="binding site" evidence="1">
    <location>
        <position position="290"/>
    </location>
    <ligand>
        <name>NAD(+)</name>
        <dbReference type="ChEBI" id="CHEBI:57540"/>
    </ligand>
</feature>
<feature type="binding site" evidence="1">
    <location>
        <position position="314"/>
    </location>
    <ligand>
        <name>NAD(+)</name>
        <dbReference type="ChEBI" id="CHEBI:57540"/>
    </ligand>
</feature>
<feature type="binding site" evidence="1">
    <location>
        <position position="408"/>
    </location>
    <ligand>
        <name>Zn(2+)</name>
        <dbReference type="ChEBI" id="CHEBI:29105"/>
    </ligand>
</feature>
<feature type="binding site" evidence="1">
    <location>
        <position position="411"/>
    </location>
    <ligand>
        <name>Zn(2+)</name>
        <dbReference type="ChEBI" id="CHEBI:29105"/>
    </ligand>
</feature>
<feature type="binding site" evidence="1">
    <location>
        <position position="426"/>
    </location>
    <ligand>
        <name>Zn(2+)</name>
        <dbReference type="ChEBI" id="CHEBI:29105"/>
    </ligand>
</feature>
<feature type="binding site" evidence="1">
    <location>
        <position position="432"/>
    </location>
    <ligand>
        <name>Zn(2+)</name>
        <dbReference type="ChEBI" id="CHEBI:29105"/>
    </ligand>
</feature>
<protein>
    <recommendedName>
        <fullName evidence="1">DNA ligase</fullName>
        <ecNumber evidence="1">6.5.1.2</ecNumber>
    </recommendedName>
    <alternativeName>
        <fullName evidence="1">Polydeoxyribonucleotide synthase [NAD(+)]</fullName>
    </alternativeName>
</protein>
<proteinExistence type="inferred from homology"/>
<comment type="function">
    <text evidence="1">DNA ligase that catalyzes the formation of phosphodiester linkages between 5'-phosphoryl and 3'-hydroxyl groups in double-stranded DNA using NAD as a coenzyme and as the energy source for the reaction. It is essential for DNA replication and repair of damaged DNA.</text>
</comment>
<comment type="catalytic activity">
    <reaction evidence="1">
        <text>NAD(+) + (deoxyribonucleotide)n-3'-hydroxyl + 5'-phospho-(deoxyribonucleotide)m = (deoxyribonucleotide)n+m + AMP + beta-nicotinamide D-nucleotide.</text>
        <dbReference type="EC" id="6.5.1.2"/>
    </reaction>
</comment>
<comment type="cofactor">
    <cofactor evidence="1">
        <name>Mg(2+)</name>
        <dbReference type="ChEBI" id="CHEBI:18420"/>
    </cofactor>
    <cofactor evidence="1">
        <name>Mn(2+)</name>
        <dbReference type="ChEBI" id="CHEBI:29035"/>
    </cofactor>
</comment>
<comment type="similarity">
    <text evidence="1">Belongs to the NAD-dependent DNA ligase family. LigA subfamily.</text>
</comment>
<gene>
    <name evidence="1" type="primary">ligA</name>
    <name type="ordered locus">ECUMN_2733</name>
</gene>
<organism>
    <name type="scientific">Escherichia coli O17:K52:H18 (strain UMN026 / ExPEC)</name>
    <dbReference type="NCBI Taxonomy" id="585056"/>
    <lineage>
        <taxon>Bacteria</taxon>
        <taxon>Pseudomonadati</taxon>
        <taxon>Pseudomonadota</taxon>
        <taxon>Gammaproteobacteria</taxon>
        <taxon>Enterobacterales</taxon>
        <taxon>Enterobacteriaceae</taxon>
        <taxon>Escherichia</taxon>
    </lineage>
</organism>
<dbReference type="EC" id="6.5.1.2" evidence="1"/>
<dbReference type="EMBL" id="CU928163">
    <property type="protein sequence ID" value="CAR13911.1"/>
    <property type="molecule type" value="Genomic_DNA"/>
</dbReference>
<dbReference type="RefSeq" id="WP_000443716.1">
    <property type="nucleotide sequence ID" value="NC_011751.1"/>
</dbReference>
<dbReference type="RefSeq" id="YP_002413438.1">
    <property type="nucleotide sequence ID" value="NC_011751.1"/>
</dbReference>
<dbReference type="SMR" id="B7N602"/>
<dbReference type="STRING" id="585056.ECUMN_2733"/>
<dbReference type="KEGG" id="eum:ECUMN_2733"/>
<dbReference type="PATRIC" id="fig|585056.7.peg.2914"/>
<dbReference type="HOGENOM" id="CLU_007764_2_1_6"/>
<dbReference type="Proteomes" id="UP000007097">
    <property type="component" value="Chromosome"/>
</dbReference>
<dbReference type="GO" id="GO:0005829">
    <property type="term" value="C:cytosol"/>
    <property type="evidence" value="ECO:0007669"/>
    <property type="project" value="TreeGrafter"/>
</dbReference>
<dbReference type="GO" id="GO:0003677">
    <property type="term" value="F:DNA binding"/>
    <property type="evidence" value="ECO:0007669"/>
    <property type="project" value="InterPro"/>
</dbReference>
<dbReference type="GO" id="GO:0003911">
    <property type="term" value="F:DNA ligase (NAD+) activity"/>
    <property type="evidence" value="ECO:0007669"/>
    <property type="project" value="UniProtKB-UniRule"/>
</dbReference>
<dbReference type="GO" id="GO:0046872">
    <property type="term" value="F:metal ion binding"/>
    <property type="evidence" value="ECO:0007669"/>
    <property type="project" value="UniProtKB-KW"/>
</dbReference>
<dbReference type="GO" id="GO:0006281">
    <property type="term" value="P:DNA repair"/>
    <property type="evidence" value="ECO:0007669"/>
    <property type="project" value="UniProtKB-KW"/>
</dbReference>
<dbReference type="GO" id="GO:0006260">
    <property type="term" value="P:DNA replication"/>
    <property type="evidence" value="ECO:0007669"/>
    <property type="project" value="UniProtKB-KW"/>
</dbReference>
<dbReference type="CDD" id="cd17748">
    <property type="entry name" value="BRCT_DNA_ligase_like"/>
    <property type="match status" value="1"/>
</dbReference>
<dbReference type="CDD" id="cd00114">
    <property type="entry name" value="LIGANc"/>
    <property type="match status" value="1"/>
</dbReference>
<dbReference type="FunFam" id="1.10.150.20:FF:000006">
    <property type="entry name" value="DNA ligase"/>
    <property type="match status" value="1"/>
</dbReference>
<dbReference type="FunFam" id="1.10.150.20:FF:000007">
    <property type="entry name" value="DNA ligase"/>
    <property type="match status" value="1"/>
</dbReference>
<dbReference type="FunFam" id="1.10.287.610:FF:000002">
    <property type="entry name" value="DNA ligase"/>
    <property type="match status" value="1"/>
</dbReference>
<dbReference type="FunFam" id="2.40.50.140:FF:000012">
    <property type="entry name" value="DNA ligase"/>
    <property type="match status" value="1"/>
</dbReference>
<dbReference type="FunFam" id="3.30.470.30:FF:000001">
    <property type="entry name" value="DNA ligase"/>
    <property type="match status" value="1"/>
</dbReference>
<dbReference type="FunFam" id="3.40.50.10190:FF:000004">
    <property type="entry name" value="DNA ligase"/>
    <property type="match status" value="1"/>
</dbReference>
<dbReference type="FunFam" id="6.20.10.30:FF:000001">
    <property type="entry name" value="DNA ligase"/>
    <property type="match status" value="1"/>
</dbReference>
<dbReference type="Gene3D" id="6.20.10.30">
    <property type="match status" value="1"/>
</dbReference>
<dbReference type="Gene3D" id="1.10.150.20">
    <property type="entry name" value="5' to 3' exonuclease, C-terminal subdomain"/>
    <property type="match status" value="2"/>
</dbReference>
<dbReference type="Gene3D" id="3.40.50.10190">
    <property type="entry name" value="BRCT domain"/>
    <property type="match status" value="1"/>
</dbReference>
<dbReference type="Gene3D" id="3.30.470.30">
    <property type="entry name" value="DNA ligase/mRNA capping enzyme"/>
    <property type="match status" value="1"/>
</dbReference>
<dbReference type="Gene3D" id="1.10.287.610">
    <property type="entry name" value="Helix hairpin bin"/>
    <property type="match status" value="1"/>
</dbReference>
<dbReference type="Gene3D" id="2.40.50.140">
    <property type="entry name" value="Nucleic acid-binding proteins"/>
    <property type="match status" value="1"/>
</dbReference>
<dbReference type="HAMAP" id="MF_01588">
    <property type="entry name" value="DNA_ligase_A"/>
    <property type="match status" value="1"/>
</dbReference>
<dbReference type="InterPro" id="IPR001357">
    <property type="entry name" value="BRCT_dom"/>
</dbReference>
<dbReference type="InterPro" id="IPR036420">
    <property type="entry name" value="BRCT_dom_sf"/>
</dbReference>
<dbReference type="InterPro" id="IPR041663">
    <property type="entry name" value="DisA/LigA_HHH"/>
</dbReference>
<dbReference type="InterPro" id="IPR001679">
    <property type="entry name" value="DNA_ligase"/>
</dbReference>
<dbReference type="InterPro" id="IPR018239">
    <property type="entry name" value="DNA_ligase_AS"/>
</dbReference>
<dbReference type="InterPro" id="IPR033136">
    <property type="entry name" value="DNA_ligase_CS"/>
</dbReference>
<dbReference type="InterPro" id="IPR013839">
    <property type="entry name" value="DNAligase_adenylation"/>
</dbReference>
<dbReference type="InterPro" id="IPR013840">
    <property type="entry name" value="DNAligase_N"/>
</dbReference>
<dbReference type="InterPro" id="IPR003583">
    <property type="entry name" value="Hlx-hairpin-Hlx_DNA-bd_motif"/>
</dbReference>
<dbReference type="InterPro" id="IPR012340">
    <property type="entry name" value="NA-bd_OB-fold"/>
</dbReference>
<dbReference type="InterPro" id="IPR004150">
    <property type="entry name" value="NAD_DNA_ligase_OB"/>
</dbReference>
<dbReference type="InterPro" id="IPR010994">
    <property type="entry name" value="RuvA_2-like"/>
</dbReference>
<dbReference type="InterPro" id="IPR004149">
    <property type="entry name" value="Znf_DNAligase_C4"/>
</dbReference>
<dbReference type="NCBIfam" id="TIGR00575">
    <property type="entry name" value="dnlj"/>
    <property type="match status" value="1"/>
</dbReference>
<dbReference type="NCBIfam" id="NF005932">
    <property type="entry name" value="PRK07956.1"/>
    <property type="match status" value="1"/>
</dbReference>
<dbReference type="PANTHER" id="PTHR23389">
    <property type="entry name" value="CHROMOSOME TRANSMISSION FIDELITY FACTOR 18"/>
    <property type="match status" value="1"/>
</dbReference>
<dbReference type="PANTHER" id="PTHR23389:SF9">
    <property type="entry name" value="DNA LIGASE"/>
    <property type="match status" value="1"/>
</dbReference>
<dbReference type="Pfam" id="PF00533">
    <property type="entry name" value="BRCT"/>
    <property type="match status" value="1"/>
</dbReference>
<dbReference type="Pfam" id="PF01653">
    <property type="entry name" value="DNA_ligase_aden"/>
    <property type="match status" value="1"/>
</dbReference>
<dbReference type="Pfam" id="PF03120">
    <property type="entry name" value="DNA_ligase_OB"/>
    <property type="match status" value="1"/>
</dbReference>
<dbReference type="Pfam" id="PF03119">
    <property type="entry name" value="DNA_ligase_ZBD"/>
    <property type="match status" value="1"/>
</dbReference>
<dbReference type="Pfam" id="PF12826">
    <property type="entry name" value="HHH_2"/>
    <property type="match status" value="1"/>
</dbReference>
<dbReference type="Pfam" id="PF14520">
    <property type="entry name" value="HHH_5"/>
    <property type="match status" value="1"/>
</dbReference>
<dbReference type="Pfam" id="PF22745">
    <property type="entry name" value="Nlig-Ia"/>
    <property type="match status" value="1"/>
</dbReference>
<dbReference type="PIRSF" id="PIRSF001604">
    <property type="entry name" value="LigA"/>
    <property type="match status" value="1"/>
</dbReference>
<dbReference type="SMART" id="SM00292">
    <property type="entry name" value="BRCT"/>
    <property type="match status" value="1"/>
</dbReference>
<dbReference type="SMART" id="SM00278">
    <property type="entry name" value="HhH1"/>
    <property type="match status" value="4"/>
</dbReference>
<dbReference type="SMART" id="SM00532">
    <property type="entry name" value="LIGANc"/>
    <property type="match status" value="1"/>
</dbReference>
<dbReference type="SUPFAM" id="SSF52113">
    <property type="entry name" value="BRCT domain"/>
    <property type="match status" value="1"/>
</dbReference>
<dbReference type="SUPFAM" id="SSF56091">
    <property type="entry name" value="DNA ligase/mRNA capping enzyme, catalytic domain"/>
    <property type="match status" value="1"/>
</dbReference>
<dbReference type="SUPFAM" id="SSF50249">
    <property type="entry name" value="Nucleic acid-binding proteins"/>
    <property type="match status" value="1"/>
</dbReference>
<dbReference type="SUPFAM" id="SSF47781">
    <property type="entry name" value="RuvA domain 2-like"/>
    <property type="match status" value="1"/>
</dbReference>
<dbReference type="PROSITE" id="PS50172">
    <property type="entry name" value="BRCT"/>
    <property type="match status" value="1"/>
</dbReference>
<dbReference type="PROSITE" id="PS01055">
    <property type="entry name" value="DNA_LIGASE_N1"/>
    <property type="match status" value="1"/>
</dbReference>
<dbReference type="PROSITE" id="PS01056">
    <property type="entry name" value="DNA_LIGASE_N2"/>
    <property type="match status" value="1"/>
</dbReference>
<name>DNLJ_ECOLU</name>